<name>T2R40_PAPHA</name>
<organism>
    <name type="scientific">Papio hamadryas</name>
    <name type="common">Hamadryas baboon</name>
    <dbReference type="NCBI Taxonomy" id="9557"/>
    <lineage>
        <taxon>Eukaryota</taxon>
        <taxon>Metazoa</taxon>
        <taxon>Chordata</taxon>
        <taxon>Craniata</taxon>
        <taxon>Vertebrata</taxon>
        <taxon>Euteleostomi</taxon>
        <taxon>Mammalia</taxon>
        <taxon>Eutheria</taxon>
        <taxon>Euarchontoglires</taxon>
        <taxon>Primates</taxon>
        <taxon>Haplorrhini</taxon>
        <taxon>Catarrhini</taxon>
        <taxon>Cercopithecidae</taxon>
        <taxon>Cercopithecinae</taxon>
        <taxon>Papio</taxon>
    </lineage>
</organism>
<accession>Q646F2</accession>
<reference key="1">
    <citation type="journal article" date="2005" name="Mol. Biol. Evol.">
        <title>Evolution of bitter taste receptors in humans and apes.</title>
        <authorList>
            <person name="Fischer A."/>
            <person name="Gilad Y."/>
            <person name="Man O."/>
            <person name="Paeaebo S."/>
        </authorList>
    </citation>
    <scope>NUCLEOTIDE SEQUENCE [GENOMIC DNA]</scope>
</reference>
<dbReference type="EMBL" id="AY724832">
    <property type="protein sequence ID" value="AAU21067.1"/>
    <property type="molecule type" value="Genomic_DNA"/>
</dbReference>
<dbReference type="GlyCosmos" id="Q646F2">
    <property type="glycosylation" value="2 sites, No reported glycans"/>
</dbReference>
<dbReference type="GO" id="GO:0005886">
    <property type="term" value="C:plasma membrane"/>
    <property type="evidence" value="ECO:0007669"/>
    <property type="project" value="UniProtKB-ARBA"/>
</dbReference>
<dbReference type="GO" id="GO:0033038">
    <property type="term" value="F:bitter taste receptor activity"/>
    <property type="evidence" value="ECO:0007669"/>
    <property type="project" value="InterPro"/>
</dbReference>
<dbReference type="GO" id="GO:0004930">
    <property type="term" value="F:G protein-coupled receptor activity"/>
    <property type="evidence" value="ECO:0007669"/>
    <property type="project" value="UniProtKB-KW"/>
</dbReference>
<dbReference type="CDD" id="cd15014">
    <property type="entry name" value="7tm_TAS2R40"/>
    <property type="match status" value="1"/>
</dbReference>
<dbReference type="FunFam" id="1.20.1070.10:FF:000055">
    <property type="entry name" value="Taste receptor type 2"/>
    <property type="match status" value="1"/>
</dbReference>
<dbReference type="Gene3D" id="1.20.1070.10">
    <property type="entry name" value="Rhodopsin 7-helix transmembrane proteins"/>
    <property type="match status" value="1"/>
</dbReference>
<dbReference type="InterPro" id="IPR007960">
    <property type="entry name" value="TAS2R"/>
</dbReference>
<dbReference type="PANTHER" id="PTHR11394">
    <property type="entry name" value="TASTE RECEPTOR TYPE 2"/>
    <property type="match status" value="1"/>
</dbReference>
<dbReference type="PANTHER" id="PTHR11394:SF47">
    <property type="entry name" value="TASTE RECEPTOR TYPE 2 MEMBER 40"/>
    <property type="match status" value="1"/>
</dbReference>
<dbReference type="Pfam" id="PF05296">
    <property type="entry name" value="TAS2R"/>
    <property type="match status" value="1"/>
</dbReference>
<dbReference type="SUPFAM" id="SSF81321">
    <property type="entry name" value="Family A G protein-coupled receptor-like"/>
    <property type="match status" value="1"/>
</dbReference>
<comment type="function">
    <text evidence="1">Gustducin-coupled receptor implicated in the perception of bitter compounds in the oral cavity and the gastrointestinal tract. Signals through PLCB2 and the calcium-regulated cation channel TRPM5 (By similarity).</text>
</comment>
<comment type="subcellular location">
    <subcellularLocation>
        <location>Membrane</location>
        <topology>Multi-pass membrane protein</topology>
    </subcellularLocation>
</comment>
<comment type="miscellaneous">
    <text>Several bitter taste receptors are expressed in a single taste receptor cell.</text>
</comment>
<comment type="similarity">
    <text evidence="3">Belongs to the G-protein coupled receptor T2R family.</text>
</comment>
<evidence type="ECO:0000250" key="1"/>
<evidence type="ECO:0000255" key="2"/>
<evidence type="ECO:0000305" key="3"/>
<keyword id="KW-0297">G-protein coupled receptor</keyword>
<keyword id="KW-0325">Glycoprotein</keyword>
<keyword id="KW-0472">Membrane</keyword>
<keyword id="KW-0675">Receptor</keyword>
<keyword id="KW-0716">Sensory transduction</keyword>
<keyword id="KW-0919">Taste</keyword>
<keyword id="KW-0807">Transducer</keyword>
<keyword id="KW-0812">Transmembrane</keyword>
<keyword id="KW-1133">Transmembrane helix</keyword>
<sequence length="323" mass="36790">MATMNTDATDKDISRFKVIFTLVVSGIECITGILGSGFITAIYGAEWARGKTLPTGDCIMLMLSFSRLLLQIWMMLENIFSLLFRIVYNQNTVYILFKVITVFLNHSNLWFAAWLKVFYCLRIANFNHPLFFLMKRKIIVLMPWLLGLSVLVSLSFSFPLSKDVFNVYVNSSIPIPSYNSTEKKYFSETNXVNLVFFYNIGIFIPLIMFILAATLLILSLKRHTLHMGSNATGSRDPSMKAHIGAIKATSYFLILYIFNAVALFLSMSNIFDTYSSWNILCKIIMAAYPXGHSIQLILGNPGLRRAWKRFQSQVPLYLKGQTL</sequence>
<feature type="chain" id="PRO_0000082291" description="Taste receptor type 2 member 40">
    <location>
        <begin position="1"/>
        <end position="323"/>
    </location>
</feature>
<feature type="topological domain" description="Extracellular" evidence="2">
    <location>
        <begin position="1"/>
        <end position="14"/>
    </location>
</feature>
<feature type="transmembrane region" description="Helical; Name=1" evidence="2">
    <location>
        <begin position="15"/>
        <end position="35"/>
    </location>
</feature>
<feature type="topological domain" description="Cytoplasmic" evidence="2">
    <location>
        <begin position="36"/>
        <end position="58"/>
    </location>
</feature>
<feature type="transmembrane region" description="Helical; Name=2" evidence="2">
    <location>
        <begin position="59"/>
        <end position="79"/>
    </location>
</feature>
<feature type="topological domain" description="Extracellular" evidence="2">
    <location>
        <begin position="80"/>
        <end position="100"/>
    </location>
</feature>
<feature type="transmembrane region" description="Helical; Name=3" evidence="2">
    <location>
        <begin position="101"/>
        <end position="121"/>
    </location>
</feature>
<feature type="topological domain" description="Cytoplasmic" evidence="2">
    <location>
        <begin position="122"/>
        <end position="140"/>
    </location>
</feature>
<feature type="transmembrane region" description="Helical; Name=4" evidence="2">
    <location>
        <begin position="141"/>
        <end position="162"/>
    </location>
</feature>
<feature type="topological domain" description="Extracellular" evidence="2">
    <location>
        <begin position="163"/>
        <end position="190"/>
    </location>
</feature>
<feature type="transmembrane region" description="Helical; Name=5" evidence="2">
    <location>
        <begin position="191"/>
        <end position="211"/>
    </location>
</feature>
<feature type="topological domain" description="Cytoplasmic" evidence="2">
    <location>
        <begin position="212"/>
        <end position="247"/>
    </location>
</feature>
<feature type="transmembrane region" description="Helical; Name=6" evidence="2">
    <location>
        <begin position="248"/>
        <end position="268"/>
    </location>
</feature>
<feature type="topological domain" description="Extracellular" evidence="2">
    <location>
        <begin position="269"/>
        <end position="276"/>
    </location>
</feature>
<feature type="transmembrane region" description="Helical; Name=7" evidence="2">
    <location>
        <begin position="277"/>
        <end position="297"/>
    </location>
</feature>
<feature type="topological domain" description="Cytoplasmic" evidence="2">
    <location>
        <begin position="298"/>
        <end position="323"/>
    </location>
</feature>
<feature type="glycosylation site" description="N-linked (GlcNAc...) asparagine" evidence="2">
    <location>
        <position position="170"/>
    </location>
</feature>
<feature type="glycosylation site" description="N-linked (GlcNAc...) asparagine" evidence="2">
    <location>
        <position position="179"/>
    </location>
</feature>
<protein>
    <recommendedName>
        <fullName>Taste receptor type 2 member 40</fullName>
        <shortName>T2R40</shortName>
    </recommendedName>
</protein>
<gene>
    <name type="primary">TAS2R40</name>
</gene>
<proteinExistence type="inferred from homology"/>